<evidence type="ECO:0000255" key="1">
    <source>
        <dbReference type="HAMAP-Rule" id="MF_01366"/>
    </source>
</evidence>
<evidence type="ECO:0000305" key="2"/>
<dbReference type="EMBL" id="CP001103">
    <property type="protein sequence ID" value="AEA96975.1"/>
    <property type="molecule type" value="Genomic_DNA"/>
</dbReference>
<dbReference type="RefSeq" id="WP_012517329.1">
    <property type="nucleotide sequence ID" value="NC_011138.3"/>
</dbReference>
<dbReference type="SMR" id="B4RXK9"/>
<dbReference type="GeneID" id="56341290"/>
<dbReference type="KEGG" id="amc:MADE_1004135"/>
<dbReference type="HOGENOM" id="CLU_082184_2_2_6"/>
<dbReference type="Proteomes" id="UP000001870">
    <property type="component" value="Chromosome"/>
</dbReference>
<dbReference type="GO" id="GO:0022625">
    <property type="term" value="C:cytosolic large ribosomal subunit"/>
    <property type="evidence" value="ECO:0007669"/>
    <property type="project" value="TreeGrafter"/>
</dbReference>
<dbReference type="GO" id="GO:0003729">
    <property type="term" value="F:mRNA binding"/>
    <property type="evidence" value="ECO:0007669"/>
    <property type="project" value="TreeGrafter"/>
</dbReference>
<dbReference type="GO" id="GO:0003735">
    <property type="term" value="F:structural constituent of ribosome"/>
    <property type="evidence" value="ECO:0007669"/>
    <property type="project" value="InterPro"/>
</dbReference>
<dbReference type="GO" id="GO:0017148">
    <property type="term" value="P:negative regulation of translation"/>
    <property type="evidence" value="ECO:0007669"/>
    <property type="project" value="TreeGrafter"/>
</dbReference>
<dbReference type="GO" id="GO:0006412">
    <property type="term" value="P:translation"/>
    <property type="evidence" value="ECO:0007669"/>
    <property type="project" value="UniProtKB-UniRule"/>
</dbReference>
<dbReference type="CDD" id="cd00392">
    <property type="entry name" value="Ribosomal_L13"/>
    <property type="match status" value="1"/>
</dbReference>
<dbReference type="FunFam" id="3.90.1180.10:FF:000001">
    <property type="entry name" value="50S ribosomal protein L13"/>
    <property type="match status" value="1"/>
</dbReference>
<dbReference type="Gene3D" id="3.90.1180.10">
    <property type="entry name" value="Ribosomal protein L13"/>
    <property type="match status" value="1"/>
</dbReference>
<dbReference type="HAMAP" id="MF_01366">
    <property type="entry name" value="Ribosomal_uL13"/>
    <property type="match status" value="1"/>
</dbReference>
<dbReference type="InterPro" id="IPR005822">
    <property type="entry name" value="Ribosomal_uL13"/>
</dbReference>
<dbReference type="InterPro" id="IPR005823">
    <property type="entry name" value="Ribosomal_uL13_bac-type"/>
</dbReference>
<dbReference type="InterPro" id="IPR023563">
    <property type="entry name" value="Ribosomal_uL13_CS"/>
</dbReference>
<dbReference type="InterPro" id="IPR036899">
    <property type="entry name" value="Ribosomal_uL13_sf"/>
</dbReference>
<dbReference type="NCBIfam" id="TIGR01066">
    <property type="entry name" value="rplM_bact"/>
    <property type="match status" value="1"/>
</dbReference>
<dbReference type="PANTHER" id="PTHR11545:SF2">
    <property type="entry name" value="LARGE RIBOSOMAL SUBUNIT PROTEIN UL13M"/>
    <property type="match status" value="1"/>
</dbReference>
<dbReference type="PANTHER" id="PTHR11545">
    <property type="entry name" value="RIBOSOMAL PROTEIN L13"/>
    <property type="match status" value="1"/>
</dbReference>
<dbReference type="Pfam" id="PF00572">
    <property type="entry name" value="Ribosomal_L13"/>
    <property type="match status" value="1"/>
</dbReference>
<dbReference type="PIRSF" id="PIRSF002181">
    <property type="entry name" value="Ribosomal_L13"/>
    <property type="match status" value="1"/>
</dbReference>
<dbReference type="SUPFAM" id="SSF52161">
    <property type="entry name" value="Ribosomal protein L13"/>
    <property type="match status" value="1"/>
</dbReference>
<dbReference type="PROSITE" id="PS00783">
    <property type="entry name" value="RIBOSOMAL_L13"/>
    <property type="match status" value="1"/>
</dbReference>
<organism>
    <name type="scientific">Alteromonas mediterranea (strain DSM 17117 / CIP 110805 / LMG 28347 / Deep ecotype)</name>
    <dbReference type="NCBI Taxonomy" id="1774373"/>
    <lineage>
        <taxon>Bacteria</taxon>
        <taxon>Pseudomonadati</taxon>
        <taxon>Pseudomonadota</taxon>
        <taxon>Gammaproteobacteria</taxon>
        <taxon>Alteromonadales</taxon>
        <taxon>Alteromonadaceae</taxon>
        <taxon>Alteromonas/Salinimonas group</taxon>
        <taxon>Alteromonas</taxon>
    </lineage>
</organism>
<gene>
    <name evidence="1" type="primary">rplM</name>
    <name type="ordered locus">MADE_1004135</name>
</gene>
<name>RL13_ALTMD</name>
<comment type="function">
    <text evidence="1">This protein is one of the early assembly proteins of the 50S ribosomal subunit, although it is not seen to bind rRNA by itself. It is important during the early stages of 50S assembly.</text>
</comment>
<comment type="subunit">
    <text evidence="1">Part of the 50S ribosomal subunit.</text>
</comment>
<comment type="similarity">
    <text evidence="1">Belongs to the universal ribosomal protein uL13 family.</text>
</comment>
<sequence>MKTFVAKPETVQRDWYVVDATDKTLGRLASEIALRLRGKHKPEYTPHVDTGDYIIVINAEKVAVTGRKAQDKMYYAHSGYPGGLKETNFEKLIAHKPEMVLEKAVKGMLPKGPLGRAMFRKMKVYAGAEHSHAAQQPQVLDI</sequence>
<feature type="chain" id="PRO_1000144086" description="Large ribosomal subunit protein uL13">
    <location>
        <begin position="1"/>
        <end position="142"/>
    </location>
</feature>
<keyword id="KW-0687">Ribonucleoprotein</keyword>
<keyword id="KW-0689">Ribosomal protein</keyword>
<reference key="1">
    <citation type="journal article" date="2008" name="ISME J.">
        <title>Comparative genomics of two ecotypes of the marine planktonic copiotroph Alteromonas macleodii suggests alternative lifestyles associated with different kinds of particulate organic matter.</title>
        <authorList>
            <person name="Ivars-Martinez E."/>
            <person name="Martin-Cuadrado A.-B."/>
            <person name="D'Auria G."/>
            <person name="Mira A."/>
            <person name="Ferriera S."/>
            <person name="Johnson J."/>
            <person name="Friedman R."/>
            <person name="Rodriguez-Valera F."/>
        </authorList>
    </citation>
    <scope>NUCLEOTIDE SEQUENCE [LARGE SCALE GENOMIC DNA]</scope>
    <source>
        <strain>DSM 17117 / CIP 110805 / LMG 28347 / Deep ecotype</strain>
    </source>
</reference>
<protein>
    <recommendedName>
        <fullName evidence="1">Large ribosomal subunit protein uL13</fullName>
    </recommendedName>
    <alternativeName>
        <fullName evidence="2">50S ribosomal protein L13</fullName>
    </alternativeName>
</protein>
<accession>B4RXK9</accession>
<accession>F2GA48</accession>
<proteinExistence type="inferred from homology"/>